<dbReference type="EC" id="2.7.11.30"/>
<dbReference type="EMBL" id="D32072">
    <property type="protein sequence ID" value="BAA06840.1"/>
    <property type="molecule type" value="mRNA"/>
</dbReference>
<dbReference type="EMBL" id="S69114">
    <property type="protein sequence ID" value="AAB30100.2"/>
    <property type="molecule type" value="mRNA"/>
</dbReference>
<dbReference type="EMBL" id="BC052629">
    <property type="status" value="NOT_ANNOTATED_CDS"/>
    <property type="molecule type" value="mRNA"/>
</dbReference>
<dbReference type="CCDS" id="CCDS23601.1">
    <molecule id="Q62312-1"/>
</dbReference>
<dbReference type="CCDS" id="CCDS23602.1">
    <molecule id="Q62312-2"/>
</dbReference>
<dbReference type="PIR" id="S51371">
    <property type="entry name" value="S51371"/>
</dbReference>
<dbReference type="RefSeq" id="NP_033397.3">
    <molecule id="Q62312-1"/>
    <property type="nucleotide sequence ID" value="NM_009371.3"/>
</dbReference>
<dbReference type="RefSeq" id="NP_083851.3">
    <molecule id="Q62312-2"/>
    <property type="nucleotide sequence ID" value="NM_029575.3"/>
</dbReference>
<dbReference type="SMR" id="Q62312"/>
<dbReference type="BioGRID" id="204164">
    <property type="interactions" value="86"/>
</dbReference>
<dbReference type="ComplexPortal" id="CPX-823">
    <property type="entry name" value="TGF-beta-1-TGFR complex"/>
</dbReference>
<dbReference type="ComplexPortal" id="CPX-826">
    <property type="entry name" value="TGF-beta-3-TGFR complex"/>
</dbReference>
<dbReference type="ComplexPortal" id="CPX-836">
    <property type="entry name" value="TGF-beta-2-TGFR complex"/>
</dbReference>
<dbReference type="CORUM" id="Q62312"/>
<dbReference type="DIP" id="DIP-44605N"/>
<dbReference type="FunCoup" id="Q62312">
    <property type="interactions" value="1314"/>
</dbReference>
<dbReference type="IntAct" id="Q62312">
    <property type="interactions" value="9"/>
</dbReference>
<dbReference type="MINT" id="Q62312"/>
<dbReference type="STRING" id="10090.ENSMUSP00000062333"/>
<dbReference type="GlyCosmos" id="Q62312">
    <property type="glycosylation" value="2 sites, No reported glycans"/>
</dbReference>
<dbReference type="GlyGen" id="Q62312">
    <property type="glycosylation" value="2 sites, 1 N-linked glycan (1 site)"/>
</dbReference>
<dbReference type="iPTMnet" id="Q62312"/>
<dbReference type="PhosphoSitePlus" id="Q62312"/>
<dbReference type="SwissPalm" id="Q62312"/>
<dbReference type="PaxDb" id="10090-ENSMUSP00000062333"/>
<dbReference type="ProteomicsDB" id="262896">
    <molecule id="Q62312-1"/>
</dbReference>
<dbReference type="ProteomicsDB" id="262897">
    <molecule id="Q62312-2"/>
</dbReference>
<dbReference type="Pumba" id="Q62312"/>
<dbReference type="Antibodypedia" id="11570">
    <property type="antibodies" value="806 antibodies from 41 providers"/>
</dbReference>
<dbReference type="DNASU" id="21813"/>
<dbReference type="Ensembl" id="ENSMUST00000035014.8">
    <molecule id="Q62312-2"/>
    <property type="protein sequence ID" value="ENSMUSP00000035014.7"/>
    <property type="gene ID" value="ENSMUSG00000032440.14"/>
</dbReference>
<dbReference type="Ensembl" id="ENSMUST00000061101.12">
    <molecule id="Q62312-1"/>
    <property type="protein sequence ID" value="ENSMUSP00000062333.5"/>
    <property type="gene ID" value="ENSMUSG00000032440.14"/>
</dbReference>
<dbReference type="GeneID" id="21813"/>
<dbReference type="KEGG" id="mmu:21813"/>
<dbReference type="UCSC" id="uc009rys.2">
    <molecule id="Q62312-2"/>
    <property type="organism name" value="mouse"/>
</dbReference>
<dbReference type="UCSC" id="uc009ryt.2">
    <molecule id="Q62312-2"/>
    <property type="organism name" value="mouse"/>
</dbReference>
<dbReference type="AGR" id="MGI:98729"/>
<dbReference type="CTD" id="7048"/>
<dbReference type="MGI" id="MGI:98729">
    <property type="gene designation" value="Tgfbr2"/>
</dbReference>
<dbReference type="VEuPathDB" id="HostDB:ENSMUSG00000032440"/>
<dbReference type="eggNOG" id="KOG3653">
    <property type="taxonomic scope" value="Eukaryota"/>
</dbReference>
<dbReference type="GeneTree" id="ENSGT00940000157527"/>
<dbReference type="HOGENOM" id="CLU_000288_8_3_1"/>
<dbReference type="InParanoid" id="Q62312"/>
<dbReference type="OMA" id="QMPNLCK"/>
<dbReference type="OrthoDB" id="547665at2759"/>
<dbReference type="PhylomeDB" id="Q62312"/>
<dbReference type="TreeFam" id="TF314724"/>
<dbReference type="BRENDA" id="2.7.10.2">
    <property type="organism ID" value="3474"/>
</dbReference>
<dbReference type="Reactome" id="R-MMU-2173788">
    <property type="pathway name" value="Downregulation of TGF-beta receptor signaling"/>
</dbReference>
<dbReference type="Reactome" id="R-MMU-2173789">
    <property type="pathway name" value="TGF-beta receptor signaling activates SMADs"/>
</dbReference>
<dbReference type="Reactome" id="R-MMU-2173791">
    <property type="pathway name" value="TGF-beta receptor signaling in EMT (epithelial to mesenchymal transition)"/>
</dbReference>
<dbReference type="Reactome" id="R-MMU-9839389">
    <property type="pathway name" value="TGFBR3 regulates TGF-beta signaling"/>
</dbReference>
<dbReference type="BioGRID-ORCS" id="21813">
    <property type="hits" value="6 hits in 77 CRISPR screens"/>
</dbReference>
<dbReference type="ChiTaRS" id="Tgfbr2">
    <property type="organism name" value="mouse"/>
</dbReference>
<dbReference type="PRO" id="PR:Q62312"/>
<dbReference type="Proteomes" id="UP000000589">
    <property type="component" value="Chromosome 9"/>
</dbReference>
<dbReference type="RNAct" id="Q62312">
    <property type="molecule type" value="protein"/>
</dbReference>
<dbReference type="Bgee" id="ENSMUSG00000032440">
    <property type="expression patterns" value="Expressed in left lung lobe and 290 other cell types or tissues"/>
</dbReference>
<dbReference type="ExpressionAtlas" id="Q62312">
    <property type="expression patterns" value="baseline and differential"/>
</dbReference>
<dbReference type="GO" id="GO:0005901">
    <property type="term" value="C:caveola"/>
    <property type="evidence" value="ECO:0000266"/>
    <property type="project" value="MGI"/>
</dbReference>
<dbReference type="GO" id="GO:0009897">
    <property type="term" value="C:external side of plasma membrane"/>
    <property type="evidence" value="ECO:0000314"/>
    <property type="project" value="MGI"/>
</dbReference>
<dbReference type="GO" id="GO:0045121">
    <property type="term" value="C:membrane raft"/>
    <property type="evidence" value="ECO:0000250"/>
    <property type="project" value="UniProtKB"/>
</dbReference>
<dbReference type="GO" id="GO:0016604">
    <property type="term" value="C:nuclear body"/>
    <property type="evidence" value="ECO:0007669"/>
    <property type="project" value="Ensembl"/>
</dbReference>
<dbReference type="GO" id="GO:0005886">
    <property type="term" value="C:plasma membrane"/>
    <property type="evidence" value="ECO:0000250"/>
    <property type="project" value="UniProtKB"/>
</dbReference>
<dbReference type="GO" id="GO:0070021">
    <property type="term" value="C:transforming growth factor beta ligand-receptor complex"/>
    <property type="evidence" value="ECO:0000266"/>
    <property type="project" value="ComplexPortal"/>
</dbReference>
<dbReference type="GO" id="GO:0005524">
    <property type="term" value="F:ATP binding"/>
    <property type="evidence" value="ECO:0007669"/>
    <property type="project" value="UniProtKB-KW"/>
</dbReference>
<dbReference type="GO" id="GO:0005539">
    <property type="term" value="F:glycosaminoglycan binding"/>
    <property type="evidence" value="ECO:0007669"/>
    <property type="project" value="Ensembl"/>
</dbReference>
<dbReference type="GO" id="GO:0019209">
    <property type="term" value="F:kinase activator activity"/>
    <property type="evidence" value="ECO:0000314"/>
    <property type="project" value="MGI"/>
</dbReference>
<dbReference type="GO" id="GO:0046872">
    <property type="term" value="F:metal ion binding"/>
    <property type="evidence" value="ECO:0007669"/>
    <property type="project" value="UniProtKB-KW"/>
</dbReference>
<dbReference type="GO" id="GO:0046332">
    <property type="term" value="F:SMAD binding"/>
    <property type="evidence" value="ECO:0000314"/>
    <property type="project" value="BHF-UCL"/>
</dbReference>
<dbReference type="GO" id="GO:0050431">
    <property type="term" value="F:transforming growth factor beta binding"/>
    <property type="evidence" value="ECO:0000353"/>
    <property type="project" value="MGI"/>
</dbReference>
<dbReference type="GO" id="GO:0005024">
    <property type="term" value="F:transforming growth factor beta receptor activity"/>
    <property type="evidence" value="ECO:0000316"/>
    <property type="project" value="MGI"/>
</dbReference>
<dbReference type="GO" id="GO:0005026">
    <property type="term" value="F:transforming growth factor beta receptor activity, type II"/>
    <property type="evidence" value="ECO:0007669"/>
    <property type="project" value="Ensembl"/>
</dbReference>
<dbReference type="GO" id="GO:0034713">
    <property type="term" value="F:type I transforming growth factor beta receptor binding"/>
    <property type="evidence" value="ECO:0007669"/>
    <property type="project" value="Ensembl"/>
</dbReference>
<dbReference type="GO" id="GO:0035909">
    <property type="term" value="P:aorta morphogenesis"/>
    <property type="evidence" value="ECO:0007669"/>
    <property type="project" value="Ensembl"/>
</dbReference>
<dbReference type="GO" id="GO:0003180">
    <property type="term" value="P:aortic valve morphogenesis"/>
    <property type="evidence" value="ECO:0007669"/>
    <property type="project" value="Ensembl"/>
</dbReference>
<dbReference type="GO" id="GO:0003181">
    <property type="term" value="P:atrioventricular valve morphogenesis"/>
    <property type="evidence" value="ECO:0000315"/>
    <property type="project" value="BHF-UCL"/>
</dbReference>
<dbReference type="GO" id="GO:0007420">
    <property type="term" value="P:brain development"/>
    <property type="evidence" value="ECO:0000315"/>
    <property type="project" value="BHF-UCL"/>
</dbReference>
<dbReference type="GO" id="GO:0001569">
    <property type="term" value="P:branching involved in blood vessel morphogenesis"/>
    <property type="evidence" value="ECO:0000315"/>
    <property type="project" value="MGI"/>
</dbReference>
<dbReference type="GO" id="GO:0060433">
    <property type="term" value="P:bronchus development"/>
    <property type="evidence" value="ECO:0000315"/>
    <property type="project" value="MGI"/>
</dbReference>
<dbReference type="GO" id="GO:0060434">
    <property type="term" value="P:bronchus morphogenesis"/>
    <property type="evidence" value="ECO:0000315"/>
    <property type="project" value="MGI"/>
</dbReference>
<dbReference type="GO" id="GO:0003214">
    <property type="term" value="P:cardiac left ventricle morphogenesis"/>
    <property type="evidence" value="ECO:0000315"/>
    <property type="project" value="BHF-UCL"/>
</dbReference>
<dbReference type="GO" id="GO:0051216">
    <property type="term" value="P:cartilage development"/>
    <property type="evidence" value="ECO:0000315"/>
    <property type="project" value="UniProtKB"/>
</dbReference>
<dbReference type="GO" id="GO:0048701">
    <property type="term" value="P:embryonic cranial skeleton morphogenesis"/>
    <property type="evidence" value="ECO:0000315"/>
    <property type="project" value="BHF-UCL"/>
</dbReference>
<dbReference type="GO" id="GO:0035162">
    <property type="term" value="P:embryonic hemopoiesis"/>
    <property type="evidence" value="ECO:0000315"/>
    <property type="project" value="BHF-UCL"/>
</dbReference>
<dbReference type="GO" id="GO:0003274">
    <property type="term" value="P:endocardial cushion fusion"/>
    <property type="evidence" value="ECO:0000315"/>
    <property type="project" value="BHF-UCL"/>
</dbReference>
<dbReference type="GO" id="GO:0001837">
    <property type="term" value="P:epithelial to mesenchymal transition"/>
    <property type="evidence" value="ECO:0007669"/>
    <property type="project" value="Ensembl"/>
</dbReference>
<dbReference type="GO" id="GO:0007369">
    <property type="term" value="P:gastrulation"/>
    <property type="evidence" value="ECO:0000315"/>
    <property type="project" value="MGI"/>
</dbReference>
<dbReference type="GO" id="GO:0003430">
    <property type="term" value="P:growth plate cartilage chondrocyte growth"/>
    <property type="evidence" value="ECO:0000315"/>
    <property type="project" value="MGI"/>
</dbReference>
<dbReference type="GO" id="GO:0003417">
    <property type="term" value="P:growth plate cartilage development"/>
    <property type="evidence" value="ECO:0000316"/>
    <property type="project" value="MGI"/>
</dbReference>
<dbReference type="GO" id="GO:0007507">
    <property type="term" value="P:heart development"/>
    <property type="evidence" value="ECO:0000315"/>
    <property type="project" value="MGI"/>
</dbReference>
<dbReference type="GO" id="GO:0001947">
    <property type="term" value="P:heart looping"/>
    <property type="evidence" value="ECO:0000315"/>
    <property type="project" value="BHF-UCL"/>
</dbReference>
<dbReference type="GO" id="GO:0001701">
    <property type="term" value="P:in utero embryonic development"/>
    <property type="evidence" value="ECO:0000315"/>
    <property type="project" value="MGI"/>
</dbReference>
<dbReference type="GO" id="GO:1905317">
    <property type="term" value="P:inferior endocardial cushion morphogenesis"/>
    <property type="evidence" value="ECO:0000315"/>
    <property type="project" value="BHF-UCL"/>
</dbReference>
<dbReference type="GO" id="GO:0061520">
    <property type="term" value="P:Langerhans cell differentiation"/>
    <property type="evidence" value="ECO:0000315"/>
    <property type="project" value="MGI"/>
</dbReference>
<dbReference type="GO" id="GO:0002088">
    <property type="term" value="P:lens development in camera-type eye"/>
    <property type="evidence" value="ECO:0000315"/>
    <property type="project" value="MGI"/>
</dbReference>
<dbReference type="GO" id="GO:1990086">
    <property type="term" value="P:lens fiber cell apoptotic process"/>
    <property type="evidence" value="ECO:0000314"/>
    <property type="project" value="MGI"/>
</dbReference>
<dbReference type="GO" id="GO:0030324">
    <property type="term" value="P:lung development"/>
    <property type="evidence" value="ECO:0000315"/>
    <property type="project" value="MGI"/>
</dbReference>
<dbReference type="GO" id="GO:0060463">
    <property type="term" value="P:lung lobe morphogenesis"/>
    <property type="evidence" value="ECO:0000315"/>
    <property type="project" value="MGI"/>
</dbReference>
<dbReference type="GO" id="GO:0060425">
    <property type="term" value="P:lung morphogenesis"/>
    <property type="evidence" value="ECO:0000315"/>
    <property type="project" value="MGI"/>
</dbReference>
<dbReference type="GO" id="GO:0060443">
    <property type="term" value="P:mammary gland morphogenesis"/>
    <property type="evidence" value="ECO:0000315"/>
    <property type="project" value="MGI"/>
</dbReference>
<dbReference type="GO" id="GO:0003149">
    <property type="term" value="P:membranous septum morphogenesis"/>
    <property type="evidence" value="ECO:0000315"/>
    <property type="project" value="BHF-UCL"/>
</dbReference>
<dbReference type="GO" id="GO:1990428">
    <property type="term" value="P:miRNA transport"/>
    <property type="evidence" value="ECO:0000315"/>
    <property type="project" value="BHF-UCL"/>
</dbReference>
<dbReference type="GO" id="GO:0007219">
    <property type="term" value="P:Notch signaling pathway"/>
    <property type="evidence" value="ECO:0000314"/>
    <property type="project" value="MGI"/>
</dbReference>
<dbReference type="GO" id="GO:0003151">
    <property type="term" value="P:outflow tract morphogenesis"/>
    <property type="evidence" value="ECO:0000315"/>
    <property type="project" value="BHF-UCL"/>
</dbReference>
<dbReference type="GO" id="GO:0003148">
    <property type="term" value="P:outflow tract septum morphogenesis"/>
    <property type="evidence" value="ECO:0000315"/>
    <property type="project" value="BHF-UCL"/>
</dbReference>
<dbReference type="GO" id="GO:0045766">
    <property type="term" value="P:positive regulation of angiogenesis"/>
    <property type="evidence" value="ECO:0000316"/>
    <property type="project" value="MGI"/>
</dbReference>
<dbReference type="GO" id="GO:0002663">
    <property type="term" value="P:positive regulation of B cell tolerance induction"/>
    <property type="evidence" value="ECO:0000315"/>
    <property type="project" value="MGI"/>
</dbReference>
<dbReference type="GO" id="GO:2000563">
    <property type="term" value="P:positive regulation of CD4-positive, alpha-beta T cell proliferation"/>
    <property type="evidence" value="ECO:0007669"/>
    <property type="project" value="Ensembl"/>
</dbReference>
<dbReference type="GO" id="GO:0010634">
    <property type="term" value="P:positive regulation of epithelial cell migration"/>
    <property type="evidence" value="ECO:0000315"/>
    <property type="project" value="MGI"/>
</dbReference>
<dbReference type="GO" id="GO:1905007">
    <property type="term" value="P:positive regulation of epithelial to mesenchymal transition involved in endocardial cushion formation"/>
    <property type="evidence" value="ECO:0000315"/>
    <property type="project" value="BHF-UCL"/>
</dbReference>
<dbReference type="GO" id="GO:0002053">
    <property type="term" value="P:positive regulation of mesenchymal cell proliferation"/>
    <property type="evidence" value="ECO:0000315"/>
    <property type="project" value="BHF-UCL"/>
</dbReference>
<dbReference type="GO" id="GO:0051138">
    <property type="term" value="P:positive regulation of NK T cell differentiation"/>
    <property type="evidence" value="ECO:0000315"/>
    <property type="project" value="MGI"/>
</dbReference>
<dbReference type="GO" id="GO:2000379">
    <property type="term" value="P:positive regulation of reactive oxygen species metabolic process"/>
    <property type="evidence" value="ECO:0007669"/>
    <property type="project" value="Ensembl"/>
</dbReference>
<dbReference type="GO" id="GO:0060391">
    <property type="term" value="P:positive regulation of SMAD protein signal transduction"/>
    <property type="evidence" value="ECO:0007669"/>
    <property type="project" value="Ensembl"/>
</dbReference>
<dbReference type="GO" id="GO:0002666">
    <property type="term" value="P:positive regulation of T cell tolerance induction"/>
    <property type="evidence" value="ECO:0000315"/>
    <property type="project" value="MGI"/>
</dbReference>
<dbReference type="GO" id="GO:0002651">
    <property type="term" value="P:positive regulation of tolerance induction to self antigen"/>
    <property type="evidence" value="ECO:0000315"/>
    <property type="project" value="MGI"/>
</dbReference>
<dbReference type="GO" id="GO:0042127">
    <property type="term" value="P:regulation of cell population proliferation"/>
    <property type="evidence" value="ECO:0000315"/>
    <property type="project" value="MGI"/>
</dbReference>
<dbReference type="GO" id="GO:0010468">
    <property type="term" value="P:regulation of gene expression"/>
    <property type="evidence" value="ECO:0000315"/>
    <property type="project" value="MGI"/>
</dbReference>
<dbReference type="GO" id="GO:2000736">
    <property type="term" value="P:regulation of stem cell differentiation"/>
    <property type="evidence" value="ECO:0007669"/>
    <property type="project" value="Ensembl"/>
</dbReference>
<dbReference type="GO" id="GO:0072091">
    <property type="term" value="P:regulation of stem cell proliferation"/>
    <property type="evidence" value="ECO:0000315"/>
    <property type="project" value="MGI"/>
</dbReference>
<dbReference type="GO" id="GO:0070723">
    <property type="term" value="P:response to cholesterol"/>
    <property type="evidence" value="ECO:0000314"/>
    <property type="project" value="BHF-UCL"/>
</dbReference>
<dbReference type="GO" id="GO:0009410">
    <property type="term" value="P:response to xenobiotic stimulus"/>
    <property type="evidence" value="ECO:0007669"/>
    <property type="project" value="Ensembl"/>
</dbReference>
<dbReference type="GO" id="GO:0062009">
    <property type="term" value="P:secondary palate development"/>
    <property type="evidence" value="ECO:0000315"/>
    <property type="project" value="BHF-UCL"/>
</dbReference>
<dbReference type="GO" id="GO:0060395">
    <property type="term" value="P:SMAD protein signal transduction"/>
    <property type="evidence" value="ECO:0000314"/>
    <property type="project" value="MGI"/>
</dbReference>
<dbReference type="GO" id="GO:0007224">
    <property type="term" value="P:smoothened signaling pathway"/>
    <property type="evidence" value="ECO:0000315"/>
    <property type="project" value="MGI"/>
</dbReference>
<dbReference type="GO" id="GO:0060440">
    <property type="term" value="P:trachea formation"/>
    <property type="evidence" value="ECO:0000315"/>
    <property type="project" value="MGI"/>
</dbReference>
<dbReference type="GO" id="GO:0060439">
    <property type="term" value="P:trachea morphogenesis"/>
    <property type="evidence" value="ECO:0000315"/>
    <property type="project" value="MGI"/>
</dbReference>
<dbReference type="GO" id="GO:0007179">
    <property type="term" value="P:transforming growth factor beta receptor signaling pathway"/>
    <property type="evidence" value="ECO:0000315"/>
    <property type="project" value="MGI"/>
</dbReference>
<dbReference type="GO" id="GO:0003186">
    <property type="term" value="P:tricuspid valve morphogenesis"/>
    <property type="evidence" value="ECO:0000315"/>
    <property type="project" value="BHF-UCL"/>
</dbReference>
<dbReference type="GO" id="GO:0001570">
    <property type="term" value="P:vasculogenesis"/>
    <property type="evidence" value="ECO:0000315"/>
    <property type="project" value="BHF-UCL"/>
</dbReference>
<dbReference type="GO" id="GO:0060412">
    <property type="term" value="P:ventricular septum morphogenesis"/>
    <property type="evidence" value="ECO:0000315"/>
    <property type="project" value="BHF-UCL"/>
</dbReference>
<dbReference type="CDD" id="cd14055">
    <property type="entry name" value="STKc_TGFbR2_like"/>
    <property type="match status" value="1"/>
</dbReference>
<dbReference type="CDD" id="cd23538">
    <property type="entry name" value="TFP_LU_ECD_TGFR2"/>
    <property type="match status" value="1"/>
</dbReference>
<dbReference type="FunFam" id="1.10.510.10:FF:000260">
    <property type="entry name" value="TGF-beta receptor type-2"/>
    <property type="match status" value="1"/>
</dbReference>
<dbReference type="FunFam" id="2.10.60.10:FF:000009">
    <property type="entry name" value="TGF-beta receptor type-2"/>
    <property type="match status" value="1"/>
</dbReference>
<dbReference type="FunFam" id="3.30.200.20:FF:000213">
    <property type="entry name" value="TGF-beta receptor type-2"/>
    <property type="match status" value="1"/>
</dbReference>
<dbReference type="Gene3D" id="2.10.60.10">
    <property type="entry name" value="CD59"/>
    <property type="match status" value="1"/>
</dbReference>
<dbReference type="Gene3D" id="3.30.200.20">
    <property type="entry name" value="Phosphorylase Kinase, domain 1"/>
    <property type="match status" value="1"/>
</dbReference>
<dbReference type="Gene3D" id="1.10.510.10">
    <property type="entry name" value="Transferase(Phosphotransferase) domain 1"/>
    <property type="match status" value="1"/>
</dbReference>
<dbReference type="InterPro" id="IPR011009">
    <property type="entry name" value="Kinase-like_dom_sf"/>
</dbReference>
<dbReference type="InterPro" id="IPR000719">
    <property type="entry name" value="Prot_kinase_dom"/>
</dbReference>
<dbReference type="InterPro" id="IPR017441">
    <property type="entry name" value="Protein_kinase_ATP_BS"/>
</dbReference>
<dbReference type="InterPro" id="IPR001245">
    <property type="entry name" value="Ser-Thr/Tyr_kinase_cat_dom"/>
</dbReference>
<dbReference type="InterPro" id="IPR008271">
    <property type="entry name" value="Ser/Thr_kinase_AS"/>
</dbReference>
<dbReference type="InterPro" id="IPR045860">
    <property type="entry name" value="Snake_toxin-like_sf"/>
</dbReference>
<dbReference type="InterPro" id="IPR000333">
    <property type="entry name" value="TGFB_receptor"/>
</dbReference>
<dbReference type="InterPro" id="IPR017194">
    <property type="entry name" value="Transform_growth_fac-b_typ-2"/>
</dbReference>
<dbReference type="InterPro" id="IPR015013">
    <property type="entry name" value="Transforming_GF_b_rcpt_2_ecto"/>
</dbReference>
<dbReference type="PANTHER" id="PTHR23255:SF55">
    <property type="entry name" value="TGF-BETA RECEPTOR TYPE-2"/>
    <property type="match status" value="1"/>
</dbReference>
<dbReference type="PANTHER" id="PTHR23255">
    <property type="entry name" value="TRANSFORMING GROWTH FACTOR-BETA RECEPTOR TYPE I AND II"/>
    <property type="match status" value="1"/>
</dbReference>
<dbReference type="Pfam" id="PF08917">
    <property type="entry name" value="ecTbetaR2"/>
    <property type="match status" value="1"/>
</dbReference>
<dbReference type="Pfam" id="PF07714">
    <property type="entry name" value="PK_Tyr_Ser-Thr"/>
    <property type="match status" value="1"/>
</dbReference>
<dbReference type="PIRSF" id="PIRSF037393">
    <property type="entry name" value="TGFRII"/>
    <property type="match status" value="1"/>
</dbReference>
<dbReference type="PRINTS" id="PR00653">
    <property type="entry name" value="ACTIVIN2R"/>
</dbReference>
<dbReference type="SMART" id="SM00220">
    <property type="entry name" value="S_TKc"/>
    <property type="match status" value="1"/>
</dbReference>
<dbReference type="SUPFAM" id="SSF56112">
    <property type="entry name" value="Protein kinase-like (PK-like)"/>
    <property type="match status" value="1"/>
</dbReference>
<dbReference type="SUPFAM" id="SSF57302">
    <property type="entry name" value="Snake toxin-like"/>
    <property type="match status" value="1"/>
</dbReference>
<dbReference type="PROSITE" id="PS00107">
    <property type="entry name" value="PROTEIN_KINASE_ATP"/>
    <property type="match status" value="1"/>
</dbReference>
<dbReference type="PROSITE" id="PS50011">
    <property type="entry name" value="PROTEIN_KINASE_DOM"/>
    <property type="match status" value="1"/>
</dbReference>
<dbReference type="PROSITE" id="PS00108">
    <property type="entry name" value="PROTEIN_KINASE_ST"/>
    <property type="match status" value="1"/>
</dbReference>
<comment type="function">
    <text evidence="2">Transmembrane serine/threonine kinase forming with the TGF-beta type I serine/threonine kinase receptor, TGFBR1, the non-promiscuous receptor for the TGF-beta cytokines TGFB1, TGFB2 and TGFB3. Transduces the TGFB1, TGFB2 and TGFB3 signal from the cell surface to the cytoplasm and is thus regulating a plethora of physiological and pathological processes including cell cycle arrest in epithelial and hematopoietic cells, control of mesenchymal cell proliferation and differentiation, wound healing, extracellular matrix production, immunosuppression and carcinogenesis. The formation of the receptor complex composed of 2 TGFBR1 and 2 TGFBR2 molecules symmetrically bound to the cytokine dimer results in the phosphorylation and the activation of TGFRB1 by the constitutively active TGFBR2. Activated TGFBR1 phosphorylates SMAD2 which dissociates from the receptor and interacts with SMAD4. The SMAD2-SMAD4 complex is subsequently translocated to the nucleus where it modulates the transcription of the TGF-beta-regulated genes. This constitutes the canonical SMAD-dependent TGF-beta signaling cascade. Also involved in non-canonical, SMAD-independent TGF-beta signaling pathways (By similarity).</text>
</comment>
<comment type="function">
    <molecule>Isoform RII-1</molecule>
    <text evidence="2">Has transforming growth factor beta-activated receptor activity.</text>
</comment>
<comment type="function">
    <molecule>Isoform RII-2</molecule>
    <text evidence="2">Has transforming growth factor beta-activated receptor activity.</text>
</comment>
<comment type="catalytic activity">
    <reaction>
        <text>L-threonyl-[receptor-protein] + ATP = O-phospho-L-threonyl-[receptor-protein] + ADP + H(+)</text>
        <dbReference type="Rhea" id="RHEA:44880"/>
        <dbReference type="Rhea" id="RHEA-COMP:11024"/>
        <dbReference type="Rhea" id="RHEA-COMP:11025"/>
        <dbReference type="ChEBI" id="CHEBI:15378"/>
        <dbReference type="ChEBI" id="CHEBI:30013"/>
        <dbReference type="ChEBI" id="CHEBI:30616"/>
        <dbReference type="ChEBI" id="CHEBI:61977"/>
        <dbReference type="ChEBI" id="CHEBI:456216"/>
        <dbReference type="EC" id="2.7.11.30"/>
    </reaction>
</comment>
<comment type="catalytic activity">
    <reaction>
        <text>L-seryl-[receptor-protein] + ATP = O-phospho-L-seryl-[receptor-protein] + ADP + H(+)</text>
        <dbReference type="Rhea" id="RHEA:18673"/>
        <dbReference type="Rhea" id="RHEA-COMP:11022"/>
        <dbReference type="Rhea" id="RHEA-COMP:11023"/>
        <dbReference type="ChEBI" id="CHEBI:15378"/>
        <dbReference type="ChEBI" id="CHEBI:29999"/>
        <dbReference type="ChEBI" id="CHEBI:30616"/>
        <dbReference type="ChEBI" id="CHEBI:83421"/>
        <dbReference type="ChEBI" id="CHEBI:456216"/>
        <dbReference type="EC" id="2.7.11.30"/>
    </reaction>
</comment>
<comment type="cofactor">
    <cofactor evidence="1">
        <name>Mg(2+)</name>
        <dbReference type="ChEBI" id="CHEBI:18420"/>
    </cofactor>
    <cofactor evidence="1">
        <name>Mn(2+)</name>
        <dbReference type="ChEBI" id="CHEBI:29035"/>
    </cofactor>
</comment>
<comment type="subunit">
    <text evidence="2">Homodimer. Heterohexamer; TGFB1, TGFB2 and TGFB3 homodimeric ligands assemble a functional receptor composed of two TGFBR1 and TGFBR2 heterodimers to form a ligand-receptor heterohexamer. The respective affinity of TGFRB1 and TGFRB2 for the ligands may modulate the kinetics of assembly of the receptor and may explain the different biological activities of TGFB1, TGFB2 and TGFB3. Component of a complex composed of TSC22D1 (via N-terminus), TGFBR1 and TGFBR2; the interaction between TSC22D1 and TGFBR1 is inhibited by SMAD7 and promoted by TGFB1 (By similarity). Interacts with DAXX. Interacts with DYNLT4. Interacts with ZFYVE9; ZFYVE9 recruits SMAD2 and SMAD3 to the TGF-beta receptor (By similarity). Interacts with and is activated by SCUBE3; this interaction does not affect TGFB1-binding to TGFBR2 (By similarity). Interacts with VPS39; this interaction is independent of the receptor kinase activity and of the presence of TGF-beta (By similarity). Interacts with CLU (By similarity).</text>
</comment>
<comment type="interaction">
    <interactant intactId="EBI-2899332">
        <id>Q62312</id>
    </interactant>
    <interactant intactId="EBI-7087433">
        <id>P55284</id>
        <label>Cdh5</label>
    </interactant>
    <organismsDiffer>false</organismsDiffer>
    <experiments>4</experiments>
</comment>
<comment type="interaction">
    <interactant intactId="EBI-2899332">
        <id>Q62312</id>
    </interactant>
    <interactant intactId="EBI-7533258">
        <id>P98083-1</id>
        <label>Shc1</label>
    </interactant>
    <organismsDiffer>false</organismsDiffer>
    <experiments>2</experiments>
</comment>
<comment type="interaction">
    <interactant intactId="EBI-2899332">
        <id>Q62312</id>
    </interactant>
    <interactant intactId="EBI-1019301">
        <id>P98083-2</id>
        <label>Shc1</label>
    </interactant>
    <organismsDiffer>false</organismsDiffer>
    <experiments>3</experiments>
</comment>
<comment type="interaction">
    <interactant intactId="EBI-2899332">
        <id>Q62312</id>
    </interactant>
    <interactant intactId="EBI-2899393">
        <id>Q64729</id>
        <label>Tgfbr1</label>
    </interactant>
    <organismsDiffer>false</organismsDiffer>
    <experiments>3</experiments>
</comment>
<comment type="interaction">
    <interactant intactId="EBI-2899332">
        <id>Q62312</id>
    </interactant>
    <interactant intactId="EBI-715138">
        <id>Q8TDM6</id>
        <label>DLG5</label>
    </interactant>
    <organismsDiffer>true</organismsDiffer>
    <experiments>3</experiments>
</comment>
<comment type="subcellular location">
    <subcellularLocation>
        <location evidence="2">Cell membrane</location>
        <topology evidence="2">Single-pass type I membrane protein</topology>
    </subcellularLocation>
    <subcellularLocation>
        <location evidence="2">Membrane raft</location>
    </subcellularLocation>
</comment>
<comment type="alternative products">
    <event type="alternative splicing"/>
    <isoform>
        <id>Q62312-2</id>
        <name>RII-1</name>
        <sequence type="displayed"/>
    </isoform>
    <isoform>
        <id>Q62312-1</id>
        <name>RII-2</name>
        <sequence type="described" ref="VSP_061515"/>
    </isoform>
</comment>
<comment type="tissue specificity">
    <text>Widely expressed in adult. Expressed primarily in mesenchyme and epidermis of the midgestational fetus.</text>
</comment>
<comment type="PTM">
    <text evidence="1">Phosphorylated on a Ser/Thr residue in the cytoplasmic domain.</text>
</comment>
<comment type="similarity">
    <text evidence="6">Belongs to the protein kinase superfamily. TKL Ser/Thr protein kinase family. TGFB receptor subfamily.</text>
</comment>
<feature type="signal peptide" evidence="3">
    <location>
        <begin position="1"/>
        <end position="23"/>
    </location>
</feature>
<feature type="chain" id="PRO_0000024427" description="TGF-beta receptor type-2">
    <location>
        <begin position="24"/>
        <end position="567"/>
    </location>
</feature>
<feature type="topological domain" description="Extracellular" evidence="3">
    <location>
        <begin position="24"/>
        <end position="166"/>
    </location>
</feature>
<feature type="transmembrane region" description="Helical" evidence="3">
    <location>
        <begin position="167"/>
        <end position="187"/>
    </location>
</feature>
<feature type="topological domain" description="Cytoplasmic" evidence="3">
    <location>
        <begin position="188"/>
        <end position="567"/>
    </location>
</feature>
<feature type="domain" description="Protein kinase" evidence="4">
    <location>
        <begin position="244"/>
        <end position="546"/>
    </location>
</feature>
<feature type="region of interest" description="Disordered" evidence="5">
    <location>
        <begin position="545"/>
        <end position="567"/>
    </location>
</feature>
<feature type="active site" description="Proton acceptor" evidence="4">
    <location>
        <position position="379"/>
    </location>
</feature>
<feature type="binding site" evidence="4">
    <location>
        <begin position="250"/>
        <end position="258"/>
    </location>
    <ligand>
        <name>ATP</name>
        <dbReference type="ChEBI" id="CHEBI:30616"/>
    </ligand>
</feature>
<feature type="binding site" evidence="4">
    <location>
        <position position="277"/>
    </location>
    <ligand>
        <name>ATP</name>
        <dbReference type="ChEBI" id="CHEBI:30616"/>
    </ligand>
</feature>
<feature type="modified residue" description="Phosphoserine" evidence="8">
    <location>
        <position position="409"/>
    </location>
</feature>
<feature type="modified residue" description="Phosphoserine" evidence="2">
    <location>
        <position position="548"/>
    </location>
</feature>
<feature type="modified residue" description="Phosphoserine" evidence="7 8">
    <location>
        <position position="553"/>
    </location>
</feature>
<feature type="glycosylation site" description="N-linked (GlcNAc...) asparagine" evidence="3">
    <location>
        <position position="70"/>
    </location>
</feature>
<feature type="glycosylation site" description="N-linked (GlcNAc...) asparagine" evidence="3">
    <location>
        <position position="94"/>
    </location>
</feature>
<feature type="disulfide bond" evidence="2">
    <location>
        <begin position="51"/>
        <end position="84"/>
    </location>
</feature>
<feature type="disulfide bond" evidence="2">
    <location>
        <begin position="54"/>
        <end position="71"/>
    </location>
</feature>
<feature type="disulfide bond" evidence="2">
    <location>
        <begin position="61"/>
        <end position="67"/>
    </location>
</feature>
<feature type="disulfide bond" evidence="2">
    <location>
        <begin position="77"/>
        <end position="101"/>
    </location>
</feature>
<feature type="disulfide bond" evidence="2">
    <location>
        <begin position="121"/>
        <end position="136"/>
    </location>
</feature>
<feature type="disulfide bond" evidence="2">
    <location>
        <begin position="138"/>
        <end position="143"/>
    </location>
</feature>
<feature type="splice variant" id="VSP_061515" description="In isoform RII-2.">
    <original>V</original>
    <variation>DVEMEAQKDASIHLSCNRTIHPLKHF</variation>
    <location>
        <position position="32"/>
    </location>
</feature>
<feature type="sequence conflict" description="In Ref. 2; AAB30100." evidence="6" ref="2">
    <original>G</original>
    <variation>A</variation>
    <location>
        <position position="8"/>
    </location>
</feature>
<feature type="sequence conflict" description="In Ref. 2; AAB30100." evidence="6" ref="2">
    <original>D</original>
    <variation>N</variation>
    <location>
        <position position="92"/>
    </location>
</feature>
<feature type="sequence conflict" description="In Ref. 2; AAB30100." evidence="6" ref="2">
    <original>A</original>
    <variation>R</variation>
    <location>
        <position position="329"/>
    </location>
</feature>
<feature type="sequence conflict" description="In Ref. 2; AAB30100." evidence="6" ref="2">
    <original>NSGQ</original>
    <variation>KQRE</variation>
    <location>
        <begin position="415"/>
        <end position="418"/>
    </location>
</feature>
<feature type="sequence conflict" description="In Ref. 2; AAB30100." evidence="6" ref="2">
    <original>C</original>
    <variation>W</variation>
    <location>
        <position position="461"/>
    </location>
</feature>
<feature type="sequence conflict" description="In Ref. 2; AAB30100." evidence="6" ref="2">
    <original>H</original>
    <variation>P</variation>
    <location>
        <position position="481"/>
    </location>
</feature>
<feature type="sequence conflict" description="In Ref. 2; AAB30100." evidence="6" ref="2">
    <original>PE</original>
    <variation>MD</variation>
    <location>
        <begin position="544"/>
        <end position="545"/>
    </location>
</feature>
<accession>Q62312</accession>
<accession>Q63947</accession>
<gene>
    <name type="primary">Tgfbr2</name>
</gene>
<sequence>MGRGLLRGLWPLHIVLWTRIASTIPPHVPKSVNSDVMASDNGGAVKLPQLCKFCDVRLSTCDNQKSCMSNCSITAICEKPHEVCVAVWRKNDKNITLETVCHDPKLTYHGFTLEDAASPKCVMKEKKRAGETFFMCACNMEECNDYIIFSEEYTTSSPDLLLVIIQVTGVSLLPPLGIAIAVIIIFYCYRVHRQQKLSPSWESSKPRKLMDFSDNCAIILEDDRSDISSTCANNINHNTELLPIELDTLVGKGRFAEVYKAKLKQNTSEQFETVAVKIFPYEEYSSWKTEKDIFSDINLKHENILQFLTAEERKTELGKQYWLITAFHAKGNLQEYLTRHVISWEDLRKLGSSLARGIAHLHSDHTPCGRPKMPIVHRDLKSSNILVKNDLTCCLCDFGLSLRLDPTLSVDDLANSGQVGTARYMAPEVLESRMNLENVESFKQTDVYSMALVLWEMTSRCNAVGEVKDYEPPFGSKVREHPCVESMKDSVLRDRGRPEIPSFWLNHQGIQIVCETLTECWDHDPEARLTAQCVAERFSELEHPERLSGRSCSQEKIPEDGSLNTTK</sequence>
<evidence type="ECO:0000250" key="1"/>
<evidence type="ECO:0000250" key="2">
    <source>
        <dbReference type="UniProtKB" id="P37173"/>
    </source>
</evidence>
<evidence type="ECO:0000255" key="3"/>
<evidence type="ECO:0000255" key="4">
    <source>
        <dbReference type="PROSITE-ProRule" id="PRU00159"/>
    </source>
</evidence>
<evidence type="ECO:0000256" key="5">
    <source>
        <dbReference type="SAM" id="MobiDB-lite"/>
    </source>
</evidence>
<evidence type="ECO:0000305" key="6"/>
<evidence type="ECO:0007744" key="7">
    <source>
    </source>
</evidence>
<evidence type="ECO:0007744" key="8">
    <source>
    </source>
</evidence>
<keyword id="KW-0025">Alternative splicing</keyword>
<keyword id="KW-0053">Apoptosis</keyword>
<keyword id="KW-0067">ATP-binding</keyword>
<keyword id="KW-1003">Cell membrane</keyword>
<keyword id="KW-0221">Differentiation</keyword>
<keyword id="KW-1015">Disulfide bond</keyword>
<keyword id="KW-0325">Glycoprotein</keyword>
<keyword id="KW-0341">Growth regulation</keyword>
<keyword id="KW-0418">Kinase</keyword>
<keyword id="KW-0460">Magnesium</keyword>
<keyword id="KW-0464">Manganese</keyword>
<keyword id="KW-0472">Membrane</keyword>
<keyword id="KW-0479">Metal-binding</keyword>
<keyword id="KW-0547">Nucleotide-binding</keyword>
<keyword id="KW-0597">Phosphoprotein</keyword>
<keyword id="KW-0675">Receptor</keyword>
<keyword id="KW-1185">Reference proteome</keyword>
<keyword id="KW-0723">Serine/threonine-protein kinase</keyword>
<keyword id="KW-0732">Signal</keyword>
<keyword id="KW-0808">Transferase</keyword>
<keyword id="KW-0812">Transmembrane</keyword>
<keyword id="KW-1133">Transmembrane helix</keyword>
<protein>
    <recommendedName>
        <fullName>TGF-beta receptor type-2</fullName>
        <shortName>TGFR-2</shortName>
        <ecNumber>2.7.11.30</ecNumber>
    </recommendedName>
    <alternativeName>
        <fullName>TGF-beta type II receptor</fullName>
    </alternativeName>
    <alternativeName>
        <fullName>Transforming growth factor-beta receptor type II</fullName>
        <shortName>TGF-beta receptor type II</shortName>
        <shortName>TbetaR-II</shortName>
    </alternativeName>
</protein>
<proteinExistence type="evidence at protein level"/>
<name>TGFR2_MOUSE</name>
<reference key="1">
    <citation type="journal article" date="1994" name="FEBS Lett.">
        <title>Cloning of an isoform of mouse TGF-beta type II receptor gene.</title>
        <authorList>
            <person name="Suzuki A."/>
            <person name="Shioda N."/>
            <person name="Maeda T."/>
            <person name="Tada M."/>
            <person name="Ueno N."/>
        </authorList>
    </citation>
    <scope>NUCLEOTIDE SEQUENCE [MRNA] (ISOFORM RII-2)</scope>
    <scope>ALTERNATIVE SPLICING</scope>
    <source>
        <tissue>Brain</tissue>
    </source>
</reference>
<reference key="2">
    <citation type="journal article" date="1994" name="Development">
        <title>The murine type II TGF-beta receptor has a coincident embryonic expression and binding preference for TGF-beta 1.</title>
        <authorList>
            <person name="Lawler S."/>
            <person name="Candia A.F."/>
            <person name="Ebner R."/>
            <person name="Shum L."/>
            <person name="Lopez A.R."/>
            <person name="Moses H.L."/>
            <person name="Wright C.V."/>
            <person name="Derynck R."/>
        </authorList>
    </citation>
    <scope>NUCLEOTIDE SEQUENCE [MRNA] (ISOFORM RII-1)</scope>
</reference>
<reference key="3">
    <citation type="journal article" date="2004" name="Genome Res.">
        <title>The status, quality, and expansion of the NIH full-length cDNA project: the Mammalian Gene Collection (MGC).</title>
        <authorList>
            <consortium name="The MGC Project Team"/>
        </authorList>
    </citation>
    <scope>NUCLEOTIDE SEQUENCE [LARGE SCALE MRNA] (ISOFORM RII-2)</scope>
    <source>
        <tissue>Olfactory epithelium</tissue>
    </source>
</reference>
<reference key="4">
    <citation type="journal article" date="2009" name="Immunity">
        <title>The phagosomal proteome in interferon-gamma-activated macrophages.</title>
        <authorList>
            <person name="Trost M."/>
            <person name="English L."/>
            <person name="Lemieux S."/>
            <person name="Courcelles M."/>
            <person name="Desjardins M."/>
            <person name="Thibault P."/>
        </authorList>
    </citation>
    <scope>PHOSPHORYLATION [LARGE SCALE ANALYSIS] AT SER-553</scope>
    <scope>IDENTIFICATION BY MASS SPECTROMETRY [LARGE SCALE ANALYSIS]</scope>
</reference>
<reference key="5">
    <citation type="journal article" date="2010" name="Cell">
        <title>A tissue-specific atlas of mouse protein phosphorylation and expression.</title>
        <authorList>
            <person name="Huttlin E.L."/>
            <person name="Jedrychowski M.P."/>
            <person name="Elias J.E."/>
            <person name="Goswami T."/>
            <person name="Rad R."/>
            <person name="Beausoleil S.A."/>
            <person name="Villen J."/>
            <person name="Haas W."/>
            <person name="Sowa M.E."/>
            <person name="Gygi S.P."/>
        </authorList>
    </citation>
    <scope>PHOSPHORYLATION [LARGE SCALE ANALYSIS] AT SER-409 AND SER-553</scope>
    <scope>IDENTIFICATION BY MASS SPECTROMETRY [LARGE SCALE ANALYSIS]</scope>
    <source>
        <tissue>Brown adipose tissue</tissue>
        <tissue>Kidney</tissue>
        <tissue>Lung</tissue>
        <tissue>Spleen</tissue>
    </source>
</reference>
<organism>
    <name type="scientific">Mus musculus</name>
    <name type="common">Mouse</name>
    <dbReference type="NCBI Taxonomy" id="10090"/>
    <lineage>
        <taxon>Eukaryota</taxon>
        <taxon>Metazoa</taxon>
        <taxon>Chordata</taxon>
        <taxon>Craniata</taxon>
        <taxon>Vertebrata</taxon>
        <taxon>Euteleostomi</taxon>
        <taxon>Mammalia</taxon>
        <taxon>Eutheria</taxon>
        <taxon>Euarchontoglires</taxon>
        <taxon>Glires</taxon>
        <taxon>Rodentia</taxon>
        <taxon>Myomorpha</taxon>
        <taxon>Muroidea</taxon>
        <taxon>Muridae</taxon>
        <taxon>Murinae</taxon>
        <taxon>Mus</taxon>
        <taxon>Mus</taxon>
    </lineage>
</organism>